<proteinExistence type="evidence at protein level"/>
<dbReference type="EMBL" id="AE000666">
    <property type="protein sequence ID" value="AAB85360.1"/>
    <property type="molecule type" value="Genomic_DNA"/>
</dbReference>
<dbReference type="PIR" id="B69215">
    <property type="entry name" value="B69215"/>
</dbReference>
<dbReference type="RefSeq" id="WP_010876495.1">
    <property type="nucleotide sequence ID" value="NC_000916.1"/>
</dbReference>
<dbReference type="PDB" id="2R47">
    <property type="method" value="X-ray"/>
    <property type="resolution" value="1.88 A"/>
    <property type="chains" value="A/B/C/D/E=1-153"/>
</dbReference>
<dbReference type="PDBsum" id="2R47"/>
<dbReference type="SMR" id="O26950"/>
<dbReference type="FunCoup" id="O26950">
    <property type="interactions" value="8"/>
</dbReference>
<dbReference type="STRING" id="187420.MTH_862"/>
<dbReference type="PaxDb" id="187420-MTH_862"/>
<dbReference type="EnsemblBacteria" id="AAB85360">
    <property type="protein sequence ID" value="AAB85360"/>
    <property type="gene ID" value="MTH_862"/>
</dbReference>
<dbReference type="GeneID" id="1471270"/>
<dbReference type="KEGG" id="mth:MTH_862"/>
<dbReference type="PATRIC" id="fig|187420.15.peg.847"/>
<dbReference type="HOGENOM" id="CLU_1682726_0_0_2"/>
<dbReference type="InParanoid" id="O26950"/>
<dbReference type="EvolutionaryTrace" id="O26950"/>
<dbReference type="Proteomes" id="UP000005223">
    <property type="component" value="Chromosome"/>
</dbReference>
<dbReference type="Gene3D" id="3.40.50.2300">
    <property type="match status" value="1"/>
</dbReference>
<dbReference type="InterPro" id="IPR009183">
    <property type="entry name" value="UCP004962"/>
</dbReference>
<dbReference type="Pfam" id="PF09897">
    <property type="entry name" value="DUF2124"/>
    <property type="match status" value="1"/>
</dbReference>
<dbReference type="PIRSF" id="PIRSF004962">
    <property type="entry name" value="UCP004962"/>
    <property type="match status" value="1"/>
</dbReference>
<sequence length="153" mass="16874">MEKLKEFRGIKEHLGVFREAVKDAERIGFAGVPGVCTPFAQLFAYAVRDKDNIFIPNTDFSKARKLEVTEYGVELGEISPGNVDVLVLLGGLSMPGIGSDIEDVKKLVEDALEEGGELMGLCYMDMFARAGWYELLDFDCVINADIDGYVLRG</sequence>
<organism>
    <name type="scientific">Methanothermobacter thermautotrophicus (strain ATCC 29096 / DSM 1053 / JCM 10044 / NBRC 100330 / Delta H)</name>
    <name type="common">Methanobacterium thermoautotrophicum</name>
    <dbReference type="NCBI Taxonomy" id="187420"/>
    <lineage>
        <taxon>Archaea</taxon>
        <taxon>Methanobacteriati</taxon>
        <taxon>Methanobacteriota</taxon>
        <taxon>Methanomada group</taxon>
        <taxon>Methanobacteria</taxon>
        <taxon>Methanobacteriales</taxon>
        <taxon>Methanobacteriaceae</taxon>
        <taxon>Methanothermobacter</taxon>
    </lineage>
</organism>
<comment type="similarity">
    <text evidence="1">To M.jannaschii MJ1183.</text>
</comment>
<feature type="chain" id="PRO_0000107207" description="Uncharacterized protein MTH_862">
    <location>
        <begin position="1"/>
        <end position="153"/>
    </location>
</feature>
<feature type="strand" evidence="2">
    <location>
        <begin position="2"/>
        <end position="8"/>
    </location>
</feature>
<feature type="helix" evidence="2">
    <location>
        <begin position="9"/>
        <end position="20"/>
    </location>
</feature>
<feature type="turn" evidence="2">
    <location>
        <begin position="21"/>
        <end position="23"/>
    </location>
</feature>
<feature type="strand" evidence="2">
    <location>
        <begin position="25"/>
        <end position="31"/>
    </location>
</feature>
<feature type="turn" evidence="2">
    <location>
        <begin position="33"/>
        <end position="36"/>
    </location>
</feature>
<feature type="helix" evidence="2">
    <location>
        <begin position="37"/>
        <end position="46"/>
    </location>
</feature>
<feature type="turn" evidence="2">
    <location>
        <begin position="47"/>
        <end position="49"/>
    </location>
</feature>
<feature type="strand" evidence="2">
    <location>
        <begin position="50"/>
        <end position="56"/>
    </location>
</feature>
<feature type="helix" evidence="2">
    <location>
        <begin position="60"/>
        <end position="62"/>
    </location>
</feature>
<feature type="strand" evidence="2">
    <location>
        <begin position="64"/>
        <end position="69"/>
    </location>
</feature>
<feature type="strand" evidence="2">
    <location>
        <begin position="72"/>
        <end position="78"/>
    </location>
</feature>
<feature type="strand" evidence="2">
    <location>
        <begin position="83"/>
        <end position="89"/>
    </location>
</feature>
<feature type="helix" evidence="2">
    <location>
        <begin position="90"/>
        <end position="93"/>
    </location>
</feature>
<feature type="turn" evidence="2">
    <location>
        <begin position="95"/>
        <end position="97"/>
    </location>
</feature>
<feature type="helix" evidence="2">
    <location>
        <begin position="101"/>
        <end position="111"/>
    </location>
</feature>
<feature type="strand" evidence="2">
    <location>
        <begin position="112"/>
        <end position="123"/>
    </location>
</feature>
<feature type="helix" evidence="2">
    <location>
        <begin position="126"/>
        <end position="129"/>
    </location>
</feature>
<feature type="helix" evidence="2">
    <location>
        <begin position="132"/>
        <end position="135"/>
    </location>
</feature>
<feature type="strand" evidence="2">
    <location>
        <begin position="139"/>
        <end position="152"/>
    </location>
</feature>
<reference key="1">
    <citation type="journal article" date="1997" name="J. Bacteriol.">
        <title>Complete genome sequence of Methanobacterium thermoautotrophicum deltaH: functional analysis and comparative genomics.</title>
        <authorList>
            <person name="Smith D.R."/>
            <person name="Doucette-Stamm L.A."/>
            <person name="Deloughery C."/>
            <person name="Lee H.-M."/>
            <person name="Dubois J."/>
            <person name="Aldredge T."/>
            <person name="Bashirzadeh R."/>
            <person name="Blakely D."/>
            <person name="Cook R."/>
            <person name="Gilbert K."/>
            <person name="Harrison D."/>
            <person name="Hoang L."/>
            <person name="Keagle P."/>
            <person name="Lumm W."/>
            <person name="Pothier B."/>
            <person name="Qiu D."/>
            <person name="Spadafora R."/>
            <person name="Vicare R."/>
            <person name="Wang Y."/>
            <person name="Wierzbowski J."/>
            <person name="Gibson R."/>
            <person name="Jiwani N."/>
            <person name="Caruso A."/>
            <person name="Bush D."/>
            <person name="Safer H."/>
            <person name="Patwell D."/>
            <person name="Prabhakar S."/>
            <person name="McDougall S."/>
            <person name="Shimer G."/>
            <person name="Goyal A."/>
            <person name="Pietrovski S."/>
            <person name="Church G.M."/>
            <person name="Daniels C.J."/>
            <person name="Mao J.-I."/>
            <person name="Rice P."/>
            <person name="Noelling J."/>
            <person name="Reeve J.N."/>
        </authorList>
    </citation>
    <scope>NUCLEOTIDE SEQUENCE [LARGE SCALE GENOMIC DNA]</scope>
    <source>
        <strain>ATCC 29096 / DSM 1053 / JCM 10044 / NBRC 100330 / Delta H</strain>
    </source>
</reference>
<accession>O26950</accession>
<gene>
    <name type="ordered locus">MTH_862</name>
</gene>
<keyword id="KW-0002">3D-structure</keyword>
<keyword id="KW-1185">Reference proteome</keyword>
<name>Y862_METTH</name>
<protein>
    <recommendedName>
        <fullName>Uncharacterized protein MTH_862</fullName>
    </recommendedName>
</protein>
<evidence type="ECO:0000305" key="1"/>
<evidence type="ECO:0007829" key="2">
    <source>
        <dbReference type="PDB" id="2R47"/>
    </source>
</evidence>